<accession>Q94LX1</accession>
<sequence length="329" mass="35249">MAAMVDSKPAASVQGTPLLATATLPVFTRGIYSTKRITLETSSPSSPPPPKPLIIVTPAEKGTFNVILFLHGTSLSNKSYSKIFDHIASHGFIVVAPQLYTSIPPPSATNELNSAAEVAEWLPQGLQQNLPENTEANVSLVAVMGHSRGGQTAFALSLRYGFGAVIGLDPVAGTSKTTGLDPSILSFDSFDFSIPVTVIGTGLGGVARCITACAPEGANHEEFFNRCKNSSRAHFVATDYGHMDILDDNPSDVKSWALSKYFCKNGNESRDPMRRCVSGIVVAFLKDFFDGDAEDFRQILKDPSFAPIKLDSVEYIDASSMLTTTHVKV</sequence>
<comment type="function">
    <text>Catalyzes the hydrolysis of ester bond in chlorophyll to yield chlorophyllide and phytol.</text>
</comment>
<comment type="catalytic activity">
    <reaction>
        <text>a chlorophyll + H2O = a chlorophyllide + phytol + H(+)</text>
        <dbReference type="Rhea" id="RHEA:19605"/>
        <dbReference type="ChEBI" id="CHEBI:15377"/>
        <dbReference type="ChEBI" id="CHEBI:15378"/>
        <dbReference type="ChEBI" id="CHEBI:17327"/>
        <dbReference type="ChEBI" id="CHEBI:139291"/>
        <dbReference type="ChEBI" id="CHEBI:139292"/>
        <dbReference type="EC" id="3.1.1.14"/>
    </reaction>
</comment>
<comment type="pathway">
    <text>Porphyrin-containing compound metabolism; chlorophyll degradation.</text>
</comment>
<comment type="subcellular location">
    <subcellularLocation>
        <location evidence="1">Plastid</location>
        <location evidence="1">Chloroplast</location>
    </subcellularLocation>
</comment>
<comment type="similarity">
    <text evidence="4">Belongs to the AB hydrolase superfamily. Lipase family.</text>
</comment>
<feature type="transit peptide" description="Chloroplast" evidence="1">
    <location>
        <begin position="1"/>
        <end position="21"/>
    </location>
</feature>
<feature type="chain" id="PRO_0000017840" description="Chlorophyllase-1, chloroplastic">
    <location>
        <begin position="22"/>
        <end position="329"/>
    </location>
</feature>
<feature type="short sequence motif" description="GXSXG" evidence="2">
    <location>
        <begin position="145"/>
        <end position="149"/>
    </location>
</feature>
<feature type="active site" description="Nucleophile" evidence="3">
    <location>
        <position position="147"/>
    </location>
</feature>
<feature type="active site" description="Charge relay system" evidence="3">
    <location>
        <position position="169"/>
    </location>
</feature>
<feature type="active site" description="Charge relay system" evidence="3">
    <location>
        <position position="242"/>
    </location>
</feature>
<dbReference type="EC" id="3.1.1.14"/>
<dbReference type="EMBL" id="AB056126">
    <property type="protein sequence ID" value="BAB47176.1"/>
    <property type="molecule type" value="mRNA"/>
</dbReference>
<dbReference type="SMR" id="Q94LX1"/>
<dbReference type="ESTHER" id="citsi-Q9MV14">
    <property type="family name" value="Chlorophyllase_Plant"/>
</dbReference>
<dbReference type="BRENDA" id="3.1.1.14">
    <property type="organism ID" value="1428"/>
</dbReference>
<dbReference type="UniPathway" id="UPA00674"/>
<dbReference type="GO" id="GO:0009507">
    <property type="term" value="C:chloroplast"/>
    <property type="evidence" value="ECO:0007669"/>
    <property type="project" value="UniProtKB-SubCell"/>
</dbReference>
<dbReference type="GO" id="GO:0047746">
    <property type="term" value="F:chlorophyllase activity"/>
    <property type="evidence" value="ECO:0007669"/>
    <property type="project" value="UniProtKB-EC"/>
</dbReference>
<dbReference type="GO" id="GO:0015996">
    <property type="term" value="P:chlorophyll catabolic process"/>
    <property type="evidence" value="ECO:0007669"/>
    <property type="project" value="UniProtKB-UniPathway"/>
</dbReference>
<dbReference type="Gene3D" id="3.40.50.1820">
    <property type="entry name" value="alpha/beta hydrolase"/>
    <property type="match status" value="1"/>
</dbReference>
<dbReference type="InterPro" id="IPR029058">
    <property type="entry name" value="AB_hydrolase_fold"/>
</dbReference>
<dbReference type="InterPro" id="IPR048264">
    <property type="entry name" value="Chlorophyllase"/>
</dbReference>
<dbReference type="InterPro" id="IPR017395">
    <property type="entry name" value="Chlorophyllase-like"/>
</dbReference>
<dbReference type="PANTHER" id="PTHR33428:SF10">
    <property type="entry name" value="CHLOROPHYLLASE-1"/>
    <property type="match status" value="1"/>
</dbReference>
<dbReference type="PANTHER" id="PTHR33428">
    <property type="entry name" value="CHLOROPHYLLASE-2, CHLOROPLASTIC"/>
    <property type="match status" value="1"/>
</dbReference>
<dbReference type="Pfam" id="PF07224">
    <property type="entry name" value="Chlorophyllase"/>
    <property type="match status" value="1"/>
</dbReference>
<dbReference type="PIRSF" id="PIRSF038128">
    <property type="entry name" value="Chlorophyllase_chloroplast"/>
    <property type="match status" value="1"/>
</dbReference>
<dbReference type="SUPFAM" id="SSF53474">
    <property type="entry name" value="alpha/beta-Hydrolases"/>
    <property type="match status" value="1"/>
</dbReference>
<dbReference type="PROSITE" id="PS00120">
    <property type="entry name" value="LIPASE_SER"/>
    <property type="match status" value="1"/>
</dbReference>
<reference key="1">
    <citation type="submission" date="2001-02" db="EMBL/GenBank/DDBJ databases">
        <title>Chlorophyllase on ethylene-treated Citrus unshiu Marc.</title>
        <authorList>
            <person name="Azuma R.K."/>
            <person name="Kurata H."/>
            <person name="Shimokawa K."/>
            <person name="Adachi M."/>
        </authorList>
    </citation>
    <scope>NUCLEOTIDE SEQUENCE [MRNA]</scope>
    <source>
        <strain>cv. Nichinan No. 1</strain>
    </source>
</reference>
<proteinExistence type="evidence at transcript level"/>
<keyword id="KW-0881">Chlorophyll catabolism</keyword>
<keyword id="KW-0150">Chloroplast</keyword>
<keyword id="KW-0378">Hydrolase</keyword>
<keyword id="KW-0934">Plastid</keyword>
<keyword id="KW-0809">Transit peptide</keyword>
<name>CLH1_CITUN</name>
<evidence type="ECO:0000250" key="1"/>
<evidence type="ECO:0000250" key="2">
    <source>
        <dbReference type="UniProtKB" id="Q948R1"/>
    </source>
</evidence>
<evidence type="ECO:0000250" key="3">
    <source>
        <dbReference type="UniProtKB" id="Q9LE89"/>
    </source>
</evidence>
<evidence type="ECO:0000305" key="4"/>
<protein>
    <recommendedName>
        <fullName>Chlorophyllase-1, chloroplastic</fullName>
        <ecNumber>3.1.1.14</ecNumber>
    </recommendedName>
    <alternativeName>
        <fullName>Chlorophyll-chlorophyllido hydrolase 1</fullName>
        <shortName>Chlase 1</shortName>
    </alternativeName>
</protein>
<organism>
    <name type="scientific">Citrus unshiu</name>
    <name type="common">Satsuma mandarin</name>
    <name type="synonym">Citrus nobilis var. unshiu</name>
    <dbReference type="NCBI Taxonomy" id="55188"/>
    <lineage>
        <taxon>Eukaryota</taxon>
        <taxon>Viridiplantae</taxon>
        <taxon>Streptophyta</taxon>
        <taxon>Embryophyta</taxon>
        <taxon>Tracheophyta</taxon>
        <taxon>Spermatophyta</taxon>
        <taxon>Magnoliopsida</taxon>
        <taxon>eudicotyledons</taxon>
        <taxon>Gunneridae</taxon>
        <taxon>Pentapetalae</taxon>
        <taxon>rosids</taxon>
        <taxon>malvids</taxon>
        <taxon>Sapindales</taxon>
        <taxon>Rutaceae</taxon>
        <taxon>Aurantioideae</taxon>
        <taxon>Citrus</taxon>
    </lineage>
</organism>